<accession>B5F8T8</accession>
<dbReference type="EMBL" id="CP001138">
    <property type="protein sequence ID" value="ACH50807.1"/>
    <property type="molecule type" value="Genomic_DNA"/>
</dbReference>
<dbReference type="RefSeq" id="WP_001240924.1">
    <property type="nucleotide sequence ID" value="NC_011149.1"/>
</dbReference>
<dbReference type="SMR" id="B5F8T8"/>
<dbReference type="KEGG" id="sea:SeAg_B0265"/>
<dbReference type="HOGENOM" id="CLU_007664_1_0_6"/>
<dbReference type="Proteomes" id="UP000008819">
    <property type="component" value="Chromosome"/>
</dbReference>
<dbReference type="GO" id="GO:1990063">
    <property type="term" value="C:Bam protein complex"/>
    <property type="evidence" value="ECO:0007669"/>
    <property type="project" value="TreeGrafter"/>
</dbReference>
<dbReference type="GO" id="GO:0043165">
    <property type="term" value="P:Gram-negative-bacterium-type cell outer membrane assembly"/>
    <property type="evidence" value="ECO:0007669"/>
    <property type="project" value="UniProtKB-UniRule"/>
</dbReference>
<dbReference type="GO" id="GO:0051205">
    <property type="term" value="P:protein insertion into membrane"/>
    <property type="evidence" value="ECO:0007669"/>
    <property type="project" value="UniProtKB-UniRule"/>
</dbReference>
<dbReference type="FunFam" id="2.40.160.50:FF:000001">
    <property type="entry name" value="Outer membrane protein assembly factor BamA"/>
    <property type="match status" value="1"/>
</dbReference>
<dbReference type="FunFam" id="3.10.20.310:FF:000001">
    <property type="entry name" value="Outer membrane protein assembly factor BamA"/>
    <property type="match status" value="1"/>
</dbReference>
<dbReference type="FunFam" id="3.10.20.310:FF:000002">
    <property type="entry name" value="Outer membrane protein assembly factor BamA"/>
    <property type="match status" value="1"/>
</dbReference>
<dbReference type="FunFam" id="3.10.20.310:FF:000003">
    <property type="entry name" value="Outer membrane protein assembly factor BamA"/>
    <property type="match status" value="1"/>
</dbReference>
<dbReference type="FunFam" id="3.10.20.310:FF:000004">
    <property type="entry name" value="Outer membrane protein assembly factor BamA"/>
    <property type="match status" value="1"/>
</dbReference>
<dbReference type="FunFam" id="3.10.20.310:FF:000005">
    <property type="entry name" value="Outer membrane protein assembly factor BamA"/>
    <property type="match status" value="1"/>
</dbReference>
<dbReference type="Gene3D" id="3.10.20.310">
    <property type="entry name" value="membrane protein fhac"/>
    <property type="match status" value="5"/>
</dbReference>
<dbReference type="Gene3D" id="2.40.160.50">
    <property type="entry name" value="membrane protein fhac: a member of the omp85/tpsb transporter family"/>
    <property type="match status" value="1"/>
</dbReference>
<dbReference type="HAMAP" id="MF_01430">
    <property type="entry name" value="OM_assembly_BamA"/>
    <property type="match status" value="1"/>
</dbReference>
<dbReference type="InterPro" id="IPR000184">
    <property type="entry name" value="Bac_surfAg_D15"/>
</dbReference>
<dbReference type="InterPro" id="IPR010827">
    <property type="entry name" value="BamA/TamA_POTRA"/>
</dbReference>
<dbReference type="InterPro" id="IPR039910">
    <property type="entry name" value="D15-like"/>
</dbReference>
<dbReference type="InterPro" id="IPR023707">
    <property type="entry name" value="OM_assembly_BamA"/>
</dbReference>
<dbReference type="InterPro" id="IPR034746">
    <property type="entry name" value="POTRA"/>
</dbReference>
<dbReference type="NCBIfam" id="TIGR03303">
    <property type="entry name" value="OM_YaeT"/>
    <property type="match status" value="1"/>
</dbReference>
<dbReference type="NCBIfam" id="NF008287">
    <property type="entry name" value="PRK11067.1"/>
    <property type="match status" value="1"/>
</dbReference>
<dbReference type="PANTHER" id="PTHR12815:SF23">
    <property type="entry name" value="OUTER MEMBRANE PROTEIN ASSEMBLY FACTOR BAMA"/>
    <property type="match status" value="1"/>
</dbReference>
<dbReference type="PANTHER" id="PTHR12815">
    <property type="entry name" value="SORTING AND ASSEMBLY MACHINERY SAMM50 PROTEIN FAMILY MEMBER"/>
    <property type="match status" value="1"/>
</dbReference>
<dbReference type="Pfam" id="PF01103">
    <property type="entry name" value="Omp85"/>
    <property type="match status" value="1"/>
</dbReference>
<dbReference type="Pfam" id="PF07244">
    <property type="entry name" value="POTRA"/>
    <property type="match status" value="4"/>
</dbReference>
<dbReference type="PIRSF" id="PIRSF006076">
    <property type="entry name" value="OM_assembly_OMP85"/>
    <property type="match status" value="1"/>
</dbReference>
<dbReference type="PROSITE" id="PS51779">
    <property type="entry name" value="POTRA"/>
    <property type="match status" value="5"/>
</dbReference>
<comment type="function">
    <text evidence="1">Part of the outer membrane protein assembly complex, which is involved in assembly and insertion of beta-barrel proteins into the outer membrane. Constitutes, with BamD, the core component of the assembly machinery.</text>
</comment>
<comment type="subunit">
    <text evidence="1">Part of the Bam complex, which is composed of the outer membrane protein BamA, and four lipoproteins BamB, BamC, BamD and BamE.</text>
</comment>
<comment type="subcellular location">
    <subcellularLocation>
        <location evidence="1">Cell outer membrane</location>
    </subcellularLocation>
</comment>
<comment type="similarity">
    <text evidence="1">Belongs to the BamA family.</text>
</comment>
<protein>
    <recommendedName>
        <fullName evidence="1">Outer membrane protein assembly factor BamA</fullName>
    </recommendedName>
</protein>
<keyword id="KW-0998">Cell outer membrane</keyword>
<keyword id="KW-0472">Membrane</keyword>
<keyword id="KW-0677">Repeat</keyword>
<keyword id="KW-0732">Signal</keyword>
<keyword id="KW-0812">Transmembrane</keyword>
<keyword id="KW-1134">Transmembrane beta strand</keyword>
<evidence type="ECO:0000255" key="1">
    <source>
        <dbReference type="HAMAP-Rule" id="MF_01430"/>
    </source>
</evidence>
<evidence type="ECO:0000255" key="2">
    <source>
        <dbReference type="PROSITE-ProRule" id="PRU01115"/>
    </source>
</evidence>
<sequence>MAMKKLLIASLLFSSATVYGAEGFVVKDIHFEGLQRVAVGAALLSMPVRTGDTVNDEDISNTIRALFATGNFEDVRVLRDGNTLLVQVKERPTIASITFSGNKSVKDDMLKQNLEASGVRVGESLDRTTLSDIEKGLEDFYYSVGKYSASVKAVVTPLPRNRVDLKLVFQEGVSAKIQQINIVGNHAFSTEELISHFQLRDEVPWWNVVGDRKYQKQKLAGDLETLRSYYLDRGYARFNIDSTQVSLTPDKKGIYITVNITEGDQYKLSGVQVSGNLAGHSAEIEKLTKIEPGELYNGTKVTKMEDDIKKLLGRYGYAYPRVQSQPEINDADKTVKLRVNVDAGNRFYVRKIRFEGNDTSKDSVLRREMRQMEGAWLGSDLVDQGKERLNRLGFFETVDTDTQRVPGSPDQVDVVYKVKERNTGSFNFGIGYGTESGVSFQAGVQQDNWLGTGYSVGINGTKNDYQTYSELSVTNPYFTVDGVSLGGRIFYNDFEADDADLSDYTNKSYGTDVTLGFPINEYNTLRAGLGYVHNKLSNMQPQIAMDRYLESMGDPDASDFAADDFTFNYGWTYNKLDRGYFPTDGSRVNLTGKVTIPGSDNEYYKVSLDTATYVPIDNDHKWVVLGRTRWGYGDGLGGKEMPFYENFYAGGSSTVRGFQSNTIGPKAVYKNGARTSGGDNDEYEDCTQESGCKSDDAVGGNAMAVASLEFITPTPFISEKYANSVRTSFFWDMGTVWDTNWDPSSAPSDVPDYSDPGNIRMSAGIALQWMSPLGPLVFSYAQPFKKYDGDKAEQFQFNIGKTW</sequence>
<name>BAMA_SALA4</name>
<feature type="signal peptide" evidence="1">
    <location>
        <begin position="1"/>
        <end position="20"/>
    </location>
</feature>
<feature type="chain" id="PRO_1000145781" description="Outer membrane protein assembly factor BamA">
    <location>
        <begin position="21"/>
        <end position="803"/>
    </location>
</feature>
<feature type="domain" description="POTRA 1" evidence="2">
    <location>
        <begin position="24"/>
        <end position="91"/>
    </location>
</feature>
<feature type="domain" description="POTRA 2" evidence="2">
    <location>
        <begin position="92"/>
        <end position="172"/>
    </location>
</feature>
<feature type="domain" description="POTRA 3" evidence="2">
    <location>
        <begin position="175"/>
        <end position="263"/>
    </location>
</feature>
<feature type="domain" description="POTRA 4" evidence="2">
    <location>
        <begin position="266"/>
        <end position="344"/>
    </location>
</feature>
<feature type="domain" description="POTRA 5" evidence="2">
    <location>
        <begin position="347"/>
        <end position="421"/>
    </location>
</feature>
<reference key="1">
    <citation type="journal article" date="2011" name="J. Bacteriol.">
        <title>Comparative genomics of 28 Salmonella enterica isolates: evidence for CRISPR-mediated adaptive sublineage evolution.</title>
        <authorList>
            <person name="Fricke W.F."/>
            <person name="Mammel M.K."/>
            <person name="McDermott P.F."/>
            <person name="Tartera C."/>
            <person name="White D.G."/>
            <person name="Leclerc J.E."/>
            <person name="Ravel J."/>
            <person name="Cebula T.A."/>
        </authorList>
    </citation>
    <scope>NUCLEOTIDE SEQUENCE [LARGE SCALE GENOMIC DNA]</scope>
    <source>
        <strain>SL483</strain>
    </source>
</reference>
<gene>
    <name evidence="1" type="primary">bamA</name>
    <name type="synonym">yaeT</name>
    <name type="ordered locus">SeAg_B0265</name>
</gene>
<organism>
    <name type="scientific">Salmonella agona (strain SL483)</name>
    <dbReference type="NCBI Taxonomy" id="454166"/>
    <lineage>
        <taxon>Bacteria</taxon>
        <taxon>Pseudomonadati</taxon>
        <taxon>Pseudomonadota</taxon>
        <taxon>Gammaproteobacteria</taxon>
        <taxon>Enterobacterales</taxon>
        <taxon>Enterobacteriaceae</taxon>
        <taxon>Salmonella</taxon>
    </lineage>
</organism>
<proteinExistence type="inferred from homology"/>